<organismHost>
    <name type="scientific">Xanthomonas campestris pv. campestris</name>
    <dbReference type="NCBI Taxonomy" id="340"/>
</organismHost>
<dbReference type="EMBL" id="X70331">
    <property type="protein sequence ID" value="CAA49796.1"/>
    <property type="molecule type" value="Genomic_DNA"/>
</dbReference>
<dbReference type="PIR" id="S33482">
    <property type="entry name" value="S33482"/>
</dbReference>
<dbReference type="SMR" id="P68676"/>
<dbReference type="Proteomes" id="UP000007611">
    <property type="component" value="Genome"/>
</dbReference>
<dbReference type="GO" id="GO:0003697">
    <property type="term" value="F:single-stranded DNA binding"/>
    <property type="evidence" value="ECO:0007669"/>
    <property type="project" value="InterPro"/>
</dbReference>
<dbReference type="GO" id="GO:0006260">
    <property type="term" value="P:DNA replication"/>
    <property type="evidence" value="ECO:0007669"/>
    <property type="project" value="UniProtKB-KW"/>
</dbReference>
<dbReference type="Gene3D" id="2.40.50.140">
    <property type="entry name" value="Nucleic acid-binding proteins"/>
    <property type="match status" value="1"/>
</dbReference>
<dbReference type="InterPro" id="IPR012340">
    <property type="entry name" value="NA-bd_OB-fold"/>
</dbReference>
<dbReference type="InterPro" id="IPR003512">
    <property type="entry name" value="Phage_M13_G5P_DNA-bd"/>
</dbReference>
<dbReference type="Pfam" id="PF02303">
    <property type="entry name" value="Phage_DNA_bind"/>
    <property type="match status" value="1"/>
</dbReference>
<dbReference type="SUPFAM" id="SSF50249">
    <property type="entry name" value="Nucleic acid-binding proteins"/>
    <property type="match status" value="1"/>
</dbReference>
<proteinExistence type="evidence at protein level"/>
<reference key="1">
    <citation type="journal article" date="1994" name="J. Gen. Virol.">
        <title>Nucleotide sequence determination, characterization and purification of the single-stranded DNA-binding protein and major coat protein of filamentous phage phi-Lf of Xanthomonas campestris pv. campestris.</title>
        <authorList>
            <person name="Wen F.-S."/>
            <person name="Tseng Y.-H."/>
        </authorList>
    </citation>
    <scope>NUCLEOTIDE SEQUENCE [GENOMIC DNA]</scope>
    <scope>PROTEIN SEQUENCE OF 1-30</scope>
</reference>
<name>G5P_BPPHL</name>
<comment type="function">
    <text evidence="1">Binds to DNA in a highly cooperative manner without pronounced sequence specificity. During synthesis of the single-stranded (progeny) viral DNA, prevents the conversion into the double-stranded replicative form. G5P is displaced by the capsid protein G8P during phage assembly on the inner bacterial membrane (By similarity).</text>
</comment>
<comment type="subunit">
    <text evidence="1">Homodimer.</text>
</comment>
<comment type="similarity">
    <text evidence="2">Belongs to the inovirus G5P protein family.</text>
</comment>
<keyword id="KW-0903">Direct protein sequencing</keyword>
<keyword id="KW-0235">DNA replication</keyword>
<keyword id="KW-0238">DNA-binding</keyword>
<keyword id="KW-1185">Reference proteome</keyword>
<feature type="chain" id="PRO_0000098224" description="DNA-Binding protein G5P">
    <location>
        <begin position="1"/>
        <end position="98"/>
    </location>
</feature>
<protein>
    <recommendedName>
        <fullName>DNA-Binding protein G5P</fullName>
        <shortName>G5P</shortName>
    </recommendedName>
    <alternativeName>
        <fullName>Single-stranded DNA-binding protein</fullName>
    </alternativeName>
</protein>
<gene>
    <name type="primary">V</name>
</gene>
<accession>P68676</accession>
<accession>Q07481</accession>
<organism>
    <name type="scientific">Xanthomonas phage phiLf</name>
    <name type="common">Bacteriophage phi-Lf</name>
    <dbReference type="NCBI Taxonomy" id="28365"/>
    <lineage>
        <taxon>Viruses</taxon>
        <taxon>Monodnaviria</taxon>
        <taxon>Loebvirae</taxon>
        <taxon>Hofneiviricota</taxon>
        <taxon>Faserviricetes</taxon>
        <taxon>Tubulavirales</taxon>
        <taxon>Inoviridae</taxon>
    </lineage>
</organism>
<sequence length="98" mass="10901">MKVQIMSSAVAVRSFPAREGKPATHFREQTAAVLREGDFPLPFTIGLDEDQPPYGEGFYIIDPKSLQNNKFGGLEFGRRIRLIPDLTAKLQQQPAKVG</sequence>
<evidence type="ECO:0000250" key="1"/>
<evidence type="ECO:0000305" key="2"/>